<organism>
    <name type="scientific">Schizosaccharomyces pombe (strain 972 / ATCC 24843)</name>
    <name type="common">Fission yeast</name>
    <dbReference type="NCBI Taxonomy" id="284812"/>
    <lineage>
        <taxon>Eukaryota</taxon>
        <taxon>Fungi</taxon>
        <taxon>Dikarya</taxon>
        <taxon>Ascomycota</taxon>
        <taxon>Taphrinomycotina</taxon>
        <taxon>Schizosaccharomycetes</taxon>
        <taxon>Schizosaccharomycetales</taxon>
        <taxon>Schizosaccharomycetaceae</taxon>
        <taxon>Schizosaccharomyces</taxon>
    </lineage>
</organism>
<feature type="chain" id="PRO_0000415920" description="Uncharacterized transporter C460.05">
    <location>
        <begin position="1"/>
        <end position="530"/>
    </location>
</feature>
<feature type="transmembrane region" description="Helical" evidence="1">
    <location>
        <begin position="83"/>
        <end position="103"/>
    </location>
</feature>
<feature type="transmembrane region" description="Helical" evidence="1">
    <location>
        <begin position="124"/>
        <end position="144"/>
    </location>
</feature>
<feature type="transmembrane region" description="Helical" evidence="1">
    <location>
        <begin position="147"/>
        <end position="167"/>
    </location>
</feature>
<feature type="transmembrane region" description="Helical" evidence="1">
    <location>
        <begin position="181"/>
        <end position="201"/>
    </location>
</feature>
<feature type="transmembrane region" description="Helical" evidence="1">
    <location>
        <begin position="211"/>
        <end position="231"/>
    </location>
</feature>
<feature type="transmembrane region" description="Helical" evidence="1">
    <location>
        <begin position="244"/>
        <end position="264"/>
    </location>
</feature>
<feature type="transmembrane region" description="Helical" evidence="1">
    <location>
        <begin position="323"/>
        <end position="343"/>
    </location>
</feature>
<feature type="transmembrane region" description="Helical" evidence="1">
    <location>
        <begin position="346"/>
        <end position="366"/>
    </location>
</feature>
<feature type="transmembrane region" description="Helical" evidence="1">
    <location>
        <begin position="375"/>
        <end position="395"/>
    </location>
</feature>
<feature type="transmembrane region" description="Helical" evidence="1">
    <location>
        <begin position="404"/>
        <end position="424"/>
    </location>
</feature>
<feature type="transmembrane region" description="Helical" evidence="1">
    <location>
        <begin position="436"/>
        <end position="456"/>
    </location>
</feature>
<feature type="transmembrane region" description="Helical" evidence="1">
    <location>
        <begin position="471"/>
        <end position="491"/>
    </location>
</feature>
<feature type="region of interest" description="Disordered" evidence="2">
    <location>
        <begin position="1"/>
        <end position="33"/>
    </location>
</feature>
<feature type="compositionally biased region" description="Basic and acidic residues" evidence="2">
    <location>
        <begin position="24"/>
        <end position="33"/>
    </location>
</feature>
<sequence length="530" mass="59473">MNNMSLKFPDIAINSSESSDDEDPSSKNEKKDGSIKVVKGLTDEKKVFEKAKNDFDEALAIIDDDDFEYTKSEDDKVRRKIDFFILPIMCITYGMQYLDKTAVSYAAVYGMKQEAHLSGYVYSWLSTIFYLGYMIAQYPAGYLLQKFPISYFMFIAAFLWSACVLLMAACSNRHGLLTLRFFSGVFEGCVNPAFVALTAMWYKREEQPVRVVSWYAFNGVAIMVGALLGYGTGHIKGSLQNWKYPFLVIGAISTAWSFVYLFFPQNPVLARFLNAREKRIAVERVRKNRTGMETKKFKPSQALEAFKDPQVILIVLYNGLCQVTNAMSVFSALIIQGIGYSGINATLLTLPSGAFAVAGMIASGIFTHYFKKGRIPLAMTTSSLTIVGSIMIWKIPHSNPWPRVVGVWLFCTISSGNAVILSLLSSNISGYSKKVTVNATMFLFYSIGNIVSPQLFKAGQTPEYIEGIQASLVSVCLFEGVLALLAFYYIFENARRDKLLENNPALGGEIKNEEFLDKTDREQIKFRYVW</sequence>
<comment type="subcellular location">
    <subcellularLocation>
        <location>Endoplasmic reticulum</location>
    </subcellularLocation>
    <subcellularLocation>
        <location evidence="3">Membrane</location>
        <topology evidence="3">Multi-pass membrane protein</topology>
    </subcellularLocation>
</comment>
<comment type="similarity">
    <text evidence="3">Belongs to the major facilitator superfamily. Allantoate permease family.</text>
</comment>
<dbReference type="EMBL" id="AB325691">
    <property type="protein sequence ID" value="BAG68905.1"/>
    <property type="molecule type" value="Genomic_DNA"/>
</dbReference>
<dbReference type="SMR" id="B5BP49"/>
<dbReference type="FunCoup" id="B5BP49">
    <property type="interactions" value="55"/>
</dbReference>
<dbReference type="STRING" id="284812.B5BP49"/>
<dbReference type="iPTMnet" id="B5BP49"/>
<dbReference type="PaxDb" id="4896-SPBC460.05.1"/>
<dbReference type="EnsemblFungi" id="SPBC460.05.1">
    <property type="protein sequence ID" value="SPBC460.05.1:pep"/>
    <property type="gene ID" value="SPBC460.05"/>
</dbReference>
<dbReference type="PomBase" id="SPBC460.05"/>
<dbReference type="VEuPathDB" id="FungiDB:SPBC460.05"/>
<dbReference type="eggNOG" id="KOG2533">
    <property type="taxonomic scope" value="Eukaryota"/>
</dbReference>
<dbReference type="HOGENOM" id="CLU_001265_0_5_1"/>
<dbReference type="InParanoid" id="B5BP49"/>
<dbReference type="OMA" id="NATMFLF"/>
<dbReference type="PRO" id="PR:B5BP49"/>
<dbReference type="GO" id="GO:0005783">
    <property type="term" value="C:endoplasmic reticulum"/>
    <property type="evidence" value="ECO:0007669"/>
    <property type="project" value="UniProtKB-SubCell"/>
</dbReference>
<dbReference type="GO" id="GO:0016020">
    <property type="term" value="C:membrane"/>
    <property type="evidence" value="ECO:0000318"/>
    <property type="project" value="GO_Central"/>
</dbReference>
<dbReference type="GO" id="GO:0022857">
    <property type="term" value="F:transmembrane transporter activity"/>
    <property type="evidence" value="ECO:0000318"/>
    <property type="project" value="GO_Central"/>
</dbReference>
<dbReference type="GO" id="GO:0055085">
    <property type="term" value="P:transmembrane transport"/>
    <property type="evidence" value="ECO:0000255"/>
    <property type="project" value="PomBase"/>
</dbReference>
<dbReference type="CDD" id="cd17327">
    <property type="entry name" value="MFS_FEN2_like"/>
    <property type="match status" value="1"/>
</dbReference>
<dbReference type="FunFam" id="1.20.1250.20:FF:000064">
    <property type="entry name" value="MFS allantoate transporter"/>
    <property type="match status" value="1"/>
</dbReference>
<dbReference type="Gene3D" id="1.20.1250.20">
    <property type="entry name" value="MFS general substrate transporter like domains"/>
    <property type="match status" value="1"/>
</dbReference>
<dbReference type="InterPro" id="IPR011701">
    <property type="entry name" value="MFS"/>
</dbReference>
<dbReference type="InterPro" id="IPR020846">
    <property type="entry name" value="MFS_dom"/>
</dbReference>
<dbReference type="InterPro" id="IPR036259">
    <property type="entry name" value="MFS_trans_sf"/>
</dbReference>
<dbReference type="PANTHER" id="PTHR43791:SF70">
    <property type="entry name" value="MAJOR FACILITATOR SUPERFAMILY (MFS) PROFILE DOMAIN-CONTAINING PROTEIN"/>
    <property type="match status" value="1"/>
</dbReference>
<dbReference type="PANTHER" id="PTHR43791">
    <property type="entry name" value="PERMEASE-RELATED"/>
    <property type="match status" value="1"/>
</dbReference>
<dbReference type="Pfam" id="PF07690">
    <property type="entry name" value="MFS_1"/>
    <property type="match status" value="1"/>
</dbReference>
<dbReference type="SUPFAM" id="SSF103473">
    <property type="entry name" value="MFS general substrate transporter"/>
    <property type="match status" value="1"/>
</dbReference>
<dbReference type="PROSITE" id="PS50850">
    <property type="entry name" value="MFS"/>
    <property type="match status" value="1"/>
</dbReference>
<accession>B5BP49</accession>
<protein>
    <recommendedName>
        <fullName>Uncharacterized transporter C460.05</fullName>
    </recommendedName>
</protein>
<reference key="1">
    <citation type="journal article" date="2008" name="Yeast">
        <title>The gap-filling sequence on the left arm of chromosome 2 in fission yeast Schizosaccharomyces pombe.</title>
        <authorList>
            <person name="Sasaki M."/>
            <person name="Idiris A."/>
            <person name="Tada A."/>
            <person name="Kumagai H."/>
            <person name="Giga-Hama Y."/>
            <person name="Tohda H."/>
        </authorList>
    </citation>
    <scope>NUCLEOTIDE SEQUENCE [LARGE SCALE GENOMIC DNA]</scope>
    <source>
        <strain>972 / ATCC 24843</strain>
    </source>
</reference>
<keyword id="KW-0256">Endoplasmic reticulum</keyword>
<keyword id="KW-0472">Membrane</keyword>
<keyword id="KW-0812">Transmembrane</keyword>
<keyword id="KW-1133">Transmembrane helix</keyword>
<keyword id="KW-0813">Transport</keyword>
<name>YP55_SCHPO</name>
<proteinExistence type="inferred from homology"/>
<gene>
    <name type="ORF">SPBC460.05</name>
</gene>
<evidence type="ECO:0000255" key="1"/>
<evidence type="ECO:0000256" key="2">
    <source>
        <dbReference type="SAM" id="MobiDB-lite"/>
    </source>
</evidence>
<evidence type="ECO:0000305" key="3"/>